<protein>
    <recommendedName>
        <fullName evidence="1">Large ribosomal subunit protein bL27</fullName>
    </recommendedName>
    <alternativeName>
        <fullName evidence="3">50S ribosomal protein L27</fullName>
    </alternativeName>
</protein>
<keyword id="KW-0687">Ribonucleoprotein</keyword>
<keyword id="KW-0689">Ribosomal protein</keyword>
<evidence type="ECO:0000255" key="1">
    <source>
        <dbReference type="HAMAP-Rule" id="MF_00539"/>
    </source>
</evidence>
<evidence type="ECO:0000256" key="2">
    <source>
        <dbReference type="SAM" id="MobiDB-lite"/>
    </source>
</evidence>
<evidence type="ECO:0000305" key="3"/>
<comment type="similarity">
    <text evidence="1">Belongs to the bacterial ribosomal protein bL27 family.</text>
</comment>
<proteinExistence type="inferred from homology"/>
<name>RL27_ACIBY</name>
<dbReference type="EMBL" id="CU459141">
    <property type="protein sequence ID" value="CAM85713.1"/>
    <property type="molecule type" value="Genomic_DNA"/>
</dbReference>
<dbReference type="RefSeq" id="WP_000201632.1">
    <property type="nucleotide sequence ID" value="NZ_JBDGFB010000002.1"/>
</dbReference>
<dbReference type="SMR" id="B0VEJ5"/>
<dbReference type="EnsemblBacteria" id="CAM85713">
    <property type="protein sequence ID" value="CAM85713"/>
    <property type="gene ID" value="ABAYE0754"/>
</dbReference>
<dbReference type="GeneID" id="92895005"/>
<dbReference type="KEGG" id="aby:ABAYE0754"/>
<dbReference type="HOGENOM" id="CLU_095424_4_1_6"/>
<dbReference type="GO" id="GO:0022625">
    <property type="term" value="C:cytosolic large ribosomal subunit"/>
    <property type="evidence" value="ECO:0007669"/>
    <property type="project" value="TreeGrafter"/>
</dbReference>
<dbReference type="GO" id="GO:0003735">
    <property type="term" value="F:structural constituent of ribosome"/>
    <property type="evidence" value="ECO:0007669"/>
    <property type="project" value="InterPro"/>
</dbReference>
<dbReference type="GO" id="GO:0006412">
    <property type="term" value="P:translation"/>
    <property type="evidence" value="ECO:0007669"/>
    <property type="project" value="UniProtKB-UniRule"/>
</dbReference>
<dbReference type="FunFam" id="2.40.50.100:FF:000001">
    <property type="entry name" value="50S ribosomal protein L27"/>
    <property type="match status" value="1"/>
</dbReference>
<dbReference type="Gene3D" id="2.40.50.100">
    <property type="match status" value="1"/>
</dbReference>
<dbReference type="HAMAP" id="MF_00539">
    <property type="entry name" value="Ribosomal_bL27"/>
    <property type="match status" value="1"/>
</dbReference>
<dbReference type="InterPro" id="IPR001684">
    <property type="entry name" value="Ribosomal_bL27"/>
</dbReference>
<dbReference type="InterPro" id="IPR018261">
    <property type="entry name" value="Ribosomal_bL27_CS"/>
</dbReference>
<dbReference type="NCBIfam" id="TIGR00062">
    <property type="entry name" value="L27"/>
    <property type="match status" value="1"/>
</dbReference>
<dbReference type="PANTHER" id="PTHR15893:SF0">
    <property type="entry name" value="LARGE RIBOSOMAL SUBUNIT PROTEIN BL27M"/>
    <property type="match status" value="1"/>
</dbReference>
<dbReference type="PANTHER" id="PTHR15893">
    <property type="entry name" value="RIBOSOMAL PROTEIN L27"/>
    <property type="match status" value="1"/>
</dbReference>
<dbReference type="Pfam" id="PF01016">
    <property type="entry name" value="Ribosomal_L27"/>
    <property type="match status" value="1"/>
</dbReference>
<dbReference type="PRINTS" id="PR00063">
    <property type="entry name" value="RIBOSOMALL27"/>
</dbReference>
<dbReference type="SUPFAM" id="SSF110324">
    <property type="entry name" value="Ribosomal L27 protein-like"/>
    <property type="match status" value="1"/>
</dbReference>
<dbReference type="PROSITE" id="PS00831">
    <property type="entry name" value="RIBOSOMAL_L27"/>
    <property type="match status" value="1"/>
</dbReference>
<gene>
    <name evidence="1" type="primary">rpmA</name>
    <name type="ordered locus">ABAYE0754</name>
</gene>
<reference key="1">
    <citation type="journal article" date="2008" name="PLoS ONE">
        <title>Comparative analysis of Acinetobacters: three genomes for three lifestyles.</title>
        <authorList>
            <person name="Vallenet D."/>
            <person name="Nordmann P."/>
            <person name="Barbe V."/>
            <person name="Poirel L."/>
            <person name="Mangenot S."/>
            <person name="Bataille E."/>
            <person name="Dossat C."/>
            <person name="Gas S."/>
            <person name="Kreimeyer A."/>
            <person name="Lenoble P."/>
            <person name="Oztas S."/>
            <person name="Poulain J."/>
            <person name="Segurens B."/>
            <person name="Robert C."/>
            <person name="Abergel C."/>
            <person name="Claverie J.-M."/>
            <person name="Raoult D."/>
            <person name="Medigue C."/>
            <person name="Weissenbach J."/>
            <person name="Cruveiller S."/>
        </authorList>
    </citation>
    <scope>NUCLEOTIDE SEQUENCE [LARGE SCALE GENOMIC DNA]</scope>
    <source>
        <strain>AYE</strain>
    </source>
</reference>
<feature type="chain" id="PRO_1000128679" description="Large ribosomal subunit protein bL27">
    <location>
        <begin position="1"/>
        <end position="85"/>
    </location>
</feature>
<feature type="region of interest" description="Disordered" evidence="2">
    <location>
        <begin position="1"/>
        <end position="20"/>
    </location>
</feature>
<accession>B0VEJ5</accession>
<sequence length="85" mass="9056">MATKKAGGSTKNGRDSNPKMLGVKVYGGQTVTAGNIIVRQRGTEFHAGANVGMGRDHTLFATADGVVKFEVKGQFGRRYVKVETV</sequence>
<organism>
    <name type="scientific">Acinetobacter baumannii (strain AYE)</name>
    <dbReference type="NCBI Taxonomy" id="509173"/>
    <lineage>
        <taxon>Bacteria</taxon>
        <taxon>Pseudomonadati</taxon>
        <taxon>Pseudomonadota</taxon>
        <taxon>Gammaproteobacteria</taxon>
        <taxon>Moraxellales</taxon>
        <taxon>Moraxellaceae</taxon>
        <taxon>Acinetobacter</taxon>
        <taxon>Acinetobacter calcoaceticus/baumannii complex</taxon>
    </lineage>
</organism>